<reference key="1">
    <citation type="journal article" date="1994" name="Maydica">
        <title>Characterization of histone H2A and H2B cDNA clones isolated from a maize ovule cDNA library.</title>
        <authorList>
            <person name="Bokhari-Riza A."/>
            <person name="Turcich M.P."/>
            <person name="Takacs I."/>
            <person name="Hamilton D.A."/>
            <person name="Mascarenhas J.P."/>
        </authorList>
    </citation>
    <scope>NUCLEOTIDE SEQUENCE [MRNA]</scope>
    <source>
        <strain>cv. Wisconsin 22</strain>
        <tissue>Ovule</tissue>
    </source>
</reference>
<keyword id="KW-0007">Acetylation</keyword>
<keyword id="KW-0158">Chromosome</keyword>
<keyword id="KW-0238">DNA-binding</keyword>
<keyword id="KW-1017">Isopeptide bond</keyword>
<keyword id="KW-0544">Nucleosome core</keyword>
<keyword id="KW-0539">Nucleus</keyword>
<keyword id="KW-1185">Reference proteome</keyword>
<keyword id="KW-0832">Ubl conjugation</keyword>
<proteinExistence type="evidence at transcript level"/>
<name>H2B5_MAIZE</name>
<accession>P54348</accession>
<evidence type="ECO:0000250" key="1"/>
<evidence type="ECO:0000256" key="2">
    <source>
        <dbReference type="SAM" id="MobiDB-lite"/>
    </source>
</evidence>
<evidence type="ECO:0000305" key="3"/>
<feature type="initiator methionine" description="Removed" evidence="1">
    <location>
        <position position="1"/>
    </location>
</feature>
<feature type="chain" id="PRO_0000071919" description="Histone H2B.5">
    <location>
        <begin position="2"/>
        <end position="154"/>
    </location>
</feature>
<feature type="region of interest" description="Disordered" evidence="2">
    <location>
        <begin position="1"/>
        <end position="62"/>
    </location>
</feature>
<feature type="compositionally biased region" description="Basic and acidic residues" evidence="2">
    <location>
        <begin position="1"/>
        <end position="25"/>
    </location>
</feature>
<feature type="modified residue" description="N6-acetyllysine" evidence="1">
    <location>
        <position position="7"/>
    </location>
</feature>
<feature type="modified residue" description="N6-acetyllysine" evidence="1">
    <location>
        <position position="39"/>
    </location>
</feature>
<feature type="cross-link" description="Glycyl lysine isopeptide (Lys-Gly) (interchain with G-Cter in ubiquitin)" evidence="1">
    <location>
        <position position="150"/>
    </location>
</feature>
<sequence length="154" mass="16617">MAPKAEKKPAAKKVAEEEPSEKAAPAEKAPAGKKPKAEKRLPAGKSAGKEGGDKKGRKKAKKSVETYKIYIFKVLKQVHPDIGISSKAMSIMNSFINDIFEKLAAEAAKLARYNKKPTITSREIQTSVRLVLPGELAKHAVSEGTKAVTKFTSS</sequence>
<comment type="function">
    <text>Core component of nucleosome. Nucleosomes wrap and compact DNA into chromatin, limiting DNA accessibility to the cellular machineries which require DNA as a template. Histones thereby play a central role in transcription regulation, DNA repair, DNA replication and chromosomal stability. DNA accessibility is regulated via a complex set of post-translational modifications of histones, also called histone code, and nucleosome remodeling.</text>
</comment>
<comment type="subunit">
    <text>The nucleosome is a histone octamer containing two molecules each of H2A, H2B, H3 and H4 assembled in one H3-H4 heterotetramer and two H2A-H2B heterodimers. The octamer wraps approximately 147 bp of DNA.</text>
</comment>
<comment type="subcellular location">
    <subcellularLocation>
        <location>Nucleus</location>
    </subcellularLocation>
    <subcellularLocation>
        <location>Chromosome</location>
    </subcellularLocation>
</comment>
<comment type="PTM">
    <text evidence="1">Can be acetylated to form H2BK6ac and H2BK33ac.</text>
</comment>
<comment type="PTM">
    <text evidence="1">Monoubiquitinated to form H2BK143ub1; may give a specific tag for epigenetic transcriptional activation.</text>
</comment>
<comment type="similarity">
    <text evidence="3">Belongs to the histone H2B family.</text>
</comment>
<comment type="caution">
    <text evidence="3">To ensure consistency between histone entries, we follow the 'Brno' nomenclature for histone modifications, with positions referring to those used in the literature for the 'closest' model organism. Due to slight variations in histone sequences between organisms and to the presence of initiator methionine in UniProtKB/Swiss-Prot sequences, the actual positions of modified amino acids in the sequence generally differ. In this entry the following conventions are used: H2BK6ac = acetylated Lys-7; H2BK33ac = acetylated Lys-39; H2BK143ub1 = monoubiquitinated Lys-150.</text>
</comment>
<protein>
    <recommendedName>
        <fullName>Histone H2B.5</fullName>
        <shortName>H2B</shortName>
    </recommendedName>
</protein>
<dbReference type="EMBL" id="U08226">
    <property type="protein sequence ID" value="AAB04688.1"/>
    <property type="molecule type" value="mRNA"/>
</dbReference>
<dbReference type="PIR" id="T02077">
    <property type="entry name" value="T02077"/>
</dbReference>
<dbReference type="RefSeq" id="NP_001105358.1">
    <property type="nucleotide sequence ID" value="NM_001111888.2"/>
</dbReference>
<dbReference type="SMR" id="P54348"/>
<dbReference type="STRING" id="4577.P54348"/>
<dbReference type="PaxDb" id="4577-GRMZM2G342515_P01"/>
<dbReference type="EnsemblPlants" id="Zm00001eb188570_T001">
    <property type="protein sequence ID" value="Zm00001eb188570_P001"/>
    <property type="gene ID" value="Zm00001eb188570"/>
</dbReference>
<dbReference type="EnsemblPlants" id="Zm00001eb188570_T002">
    <property type="protein sequence ID" value="Zm00001eb188570_P002"/>
    <property type="gene ID" value="Zm00001eb188570"/>
</dbReference>
<dbReference type="GeneID" id="542301"/>
<dbReference type="Gramene" id="Zm00001eb188570_T001">
    <property type="protein sequence ID" value="Zm00001eb188570_P001"/>
    <property type="gene ID" value="Zm00001eb188570"/>
</dbReference>
<dbReference type="Gramene" id="Zm00001eb188570_T002">
    <property type="protein sequence ID" value="Zm00001eb188570_P002"/>
    <property type="gene ID" value="Zm00001eb188570"/>
</dbReference>
<dbReference type="KEGG" id="zma:542301"/>
<dbReference type="MaizeGDB" id="65109"/>
<dbReference type="eggNOG" id="KOG1744">
    <property type="taxonomic scope" value="Eukaryota"/>
</dbReference>
<dbReference type="HOGENOM" id="CLU_075666_1_3_1"/>
<dbReference type="InParanoid" id="P54348"/>
<dbReference type="OMA" id="RITIEAC"/>
<dbReference type="OrthoDB" id="1914959at2759"/>
<dbReference type="Proteomes" id="UP000007305">
    <property type="component" value="Chromosome 4"/>
</dbReference>
<dbReference type="ExpressionAtlas" id="P54348">
    <property type="expression patterns" value="baseline and differential"/>
</dbReference>
<dbReference type="GO" id="GO:0000786">
    <property type="term" value="C:nucleosome"/>
    <property type="evidence" value="ECO:0007669"/>
    <property type="project" value="UniProtKB-KW"/>
</dbReference>
<dbReference type="GO" id="GO:0005634">
    <property type="term" value="C:nucleus"/>
    <property type="evidence" value="ECO:0007669"/>
    <property type="project" value="UniProtKB-SubCell"/>
</dbReference>
<dbReference type="GO" id="GO:0003677">
    <property type="term" value="F:DNA binding"/>
    <property type="evidence" value="ECO:0000318"/>
    <property type="project" value="GO_Central"/>
</dbReference>
<dbReference type="GO" id="GO:0046982">
    <property type="term" value="F:protein heterodimerization activity"/>
    <property type="evidence" value="ECO:0007669"/>
    <property type="project" value="InterPro"/>
</dbReference>
<dbReference type="GO" id="GO:0030527">
    <property type="term" value="F:structural constituent of chromatin"/>
    <property type="evidence" value="ECO:0007669"/>
    <property type="project" value="InterPro"/>
</dbReference>
<dbReference type="CDD" id="cd22910">
    <property type="entry name" value="HFD_H2B"/>
    <property type="match status" value="1"/>
</dbReference>
<dbReference type="FunFam" id="1.10.20.10:FF:000014">
    <property type="entry name" value="Histone H2B"/>
    <property type="match status" value="1"/>
</dbReference>
<dbReference type="Gene3D" id="1.10.20.10">
    <property type="entry name" value="Histone, subunit A"/>
    <property type="match status" value="1"/>
</dbReference>
<dbReference type="InterPro" id="IPR009072">
    <property type="entry name" value="Histone-fold"/>
</dbReference>
<dbReference type="InterPro" id="IPR007125">
    <property type="entry name" value="Histone_H2A/H2B/H3"/>
</dbReference>
<dbReference type="InterPro" id="IPR000558">
    <property type="entry name" value="Histone_H2B"/>
</dbReference>
<dbReference type="InterPro" id="IPR055333">
    <property type="entry name" value="HISTONE_H2B_site"/>
</dbReference>
<dbReference type="PANTHER" id="PTHR23428">
    <property type="entry name" value="HISTONE H2B"/>
    <property type="match status" value="1"/>
</dbReference>
<dbReference type="Pfam" id="PF00125">
    <property type="entry name" value="Histone"/>
    <property type="match status" value="1"/>
</dbReference>
<dbReference type="PRINTS" id="PR00621">
    <property type="entry name" value="HISTONEH2B"/>
</dbReference>
<dbReference type="SMART" id="SM00427">
    <property type="entry name" value="H2B"/>
    <property type="match status" value="1"/>
</dbReference>
<dbReference type="SUPFAM" id="SSF47113">
    <property type="entry name" value="Histone-fold"/>
    <property type="match status" value="1"/>
</dbReference>
<dbReference type="PROSITE" id="PS00357">
    <property type="entry name" value="HISTONE_H2B"/>
    <property type="match status" value="1"/>
</dbReference>
<organism>
    <name type="scientific">Zea mays</name>
    <name type="common">Maize</name>
    <dbReference type="NCBI Taxonomy" id="4577"/>
    <lineage>
        <taxon>Eukaryota</taxon>
        <taxon>Viridiplantae</taxon>
        <taxon>Streptophyta</taxon>
        <taxon>Embryophyta</taxon>
        <taxon>Tracheophyta</taxon>
        <taxon>Spermatophyta</taxon>
        <taxon>Magnoliopsida</taxon>
        <taxon>Liliopsida</taxon>
        <taxon>Poales</taxon>
        <taxon>Poaceae</taxon>
        <taxon>PACMAD clade</taxon>
        <taxon>Panicoideae</taxon>
        <taxon>Andropogonodae</taxon>
        <taxon>Andropogoneae</taxon>
        <taxon>Tripsacinae</taxon>
        <taxon>Zea</taxon>
    </lineage>
</organism>